<evidence type="ECO:0000250" key="1"/>
<evidence type="ECO:0000255" key="2">
    <source>
        <dbReference type="HAMAP-Rule" id="MF_03046"/>
    </source>
</evidence>
<feature type="chain" id="PRO_0000367551" description="Enhancer of yellow 2 transcription factor">
    <location>
        <begin position="1"/>
        <end position="92"/>
    </location>
</feature>
<protein>
    <recommendedName>
        <fullName evidence="2">Enhancer of yellow 2 transcription factor</fullName>
    </recommendedName>
</protein>
<accession>Q17MZ8</accession>
<name>ENY2_AEDAE</name>
<sequence>MTFTKSVDQTTILQGDRSKLKDLLRLRLNACGWSDQVRLLCREAIKEQDSINCDALVQQVTPKARALIPDTVKKELLQKIKTILVQQEGIDI</sequence>
<gene>
    <name evidence="2" type="primary">e(y)2</name>
    <name type="ORF">AAEL000903</name>
</gene>
<dbReference type="EMBL" id="CH477203">
    <property type="protein sequence ID" value="EAT48004.1"/>
    <property type="molecule type" value="Genomic_DNA"/>
</dbReference>
<dbReference type="SMR" id="Q17MZ8"/>
<dbReference type="FunCoup" id="Q17MZ8">
    <property type="interactions" value="1549"/>
</dbReference>
<dbReference type="STRING" id="7159.Q17MZ8"/>
<dbReference type="PaxDb" id="7159-AAEL000903-PA"/>
<dbReference type="EnsemblMetazoa" id="AAEL000903-RA">
    <property type="protein sequence ID" value="AAEL000903-PA"/>
    <property type="gene ID" value="AAEL000903"/>
</dbReference>
<dbReference type="GeneID" id="5567175"/>
<dbReference type="KEGG" id="aag:5567175"/>
<dbReference type="CTD" id="45848"/>
<dbReference type="VEuPathDB" id="VectorBase:AAEL000903"/>
<dbReference type="eggNOG" id="KOG4479">
    <property type="taxonomic scope" value="Eukaryota"/>
</dbReference>
<dbReference type="HOGENOM" id="CLU_134052_1_1_1"/>
<dbReference type="InParanoid" id="Q17MZ8"/>
<dbReference type="OMA" id="RLMCRNI"/>
<dbReference type="OrthoDB" id="6221744at2759"/>
<dbReference type="PhylomeDB" id="Q17MZ8"/>
<dbReference type="Proteomes" id="UP000008820">
    <property type="component" value="Chromosome 3"/>
</dbReference>
<dbReference type="Proteomes" id="UP000682892">
    <property type="component" value="Unassembled WGS sequence"/>
</dbReference>
<dbReference type="GO" id="GO:0071819">
    <property type="term" value="C:DUBm complex"/>
    <property type="evidence" value="ECO:0007669"/>
    <property type="project" value="UniProtKB-UniRule"/>
</dbReference>
<dbReference type="GO" id="GO:0005643">
    <property type="term" value="C:nuclear pore"/>
    <property type="evidence" value="ECO:0007669"/>
    <property type="project" value="UniProtKB-UniRule"/>
</dbReference>
<dbReference type="GO" id="GO:0005654">
    <property type="term" value="C:nucleoplasm"/>
    <property type="evidence" value="ECO:0007669"/>
    <property type="project" value="UniProtKB-SubCell"/>
</dbReference>
<dbReference type="GO" id="GO:0000124">
    <property type="term" value="C:SAGA complex"/>
    <property type="evidence" value="ECO:0007669"/>
    <property type="project" value="UniProtKB-UniRule"/>
</dbReference>
<dbReference type="GO" id="GO:0070390">
    <property type="term" value="C:transcription export complex 2"/>
    <property type="evidence" value="ECO:0007669"/>
    <property type="project" value="UniProtKB-UniRule"/>
</dbReference>
<dbReference type="GO" id="GO:0003713">
    <property type="term" value="F:transcription coactivator activity"/>
    <property type="evidence" value="ECO:0007669"/>
    <property type="project" value="UniProtKB-UniRule"/>
</dbReference>
<dbReference type="GO" id="GO:0006325">
    <property type="term" value="P:chromatin organization"/>
    <property type="evidence" value="ECO:0007669"/>
    <property type="project" value="UniProtKB-KW"/>
</dbReference>
<dbReference type="GO" id="GO:0006406">
    <property type="term" value="P:mRNA export from nucleus"/>
    <property type="evidence" value="ECO:0007669"/>
    <property type="project" value="UniProtKB-UniRule"/>
</dbReference>
<dbReference type="GO" id="GO:0015031">
    <property type="term" value="P:protein transport"/>
    <property type="evidence" value="ECO:0007669"/>
    <property type="project" value="UniProtKB-KW"/>
</dbReference>
<dbReference type="GO" id="GO:0006368">
    <property type="term" value="P:transcription elongation by RNA polymerase II"/>
    <property type="evidence" value="ECO:0007669"/>
    <property type="project" value="UniProtKB-UniRule"/>
</dbReference>
<dbReference type="Gene3D" id="1.10.246.140">
    <property type="match status" value="1"/>
</dbReference>
<dbReference type="HAMAP" id="MF_03046">
    <property type="entry name" value="ENY2_Sus1"/>
    <property type="match status" value="1"/>
</dbReference>
<dbReference type="InterPro" id="IPR018783">
    <property type="entry name" value="TF_ENY2"/>
</dbReference>
<dbReference type="InterPro" id="IPR038212">
    <property type="entry name" value="TF_EnY2_sf"/>
</dbReference>
<dbReference type="PANTHER" id="PTHR12514">
    <property type="entry name" value="ENHANCER OF YELLOW 2 TRANSCRIPTION FACTOR"/>
    <property type="match status" value="1"/>
</dbReference>
<dbReference type="Pfam" id="PF10163">
    <property type="entry name" value="EnY2"/>
    <property type="match status" value="1"/>
</dbReference>
<reference key="1">
    <citation type="journal article" date="2007" name="Science">
        <title>Genome sequence of Aedes aegypti, a major arbovirus vector.</title>
        <authorList>
            <person name="Nene V."/>
            <person name="Wortman J.R."/>
            <person name="Lawson D."/>
            <person name="Haas B.J."/>
            <person name="Kodira C.D."/>
            <person name="Tu Z.J."/>
            <person name="Loftus B.J."/>
            <person name="Xi Z."/>
            <person name="Megy K."/>
            <person name="Grabherr M."/>
            <person name="Ren Q."/>
            <person name="Zdobnov E.M."/>
            <person name="Lobo N.F."/>
            <person name="Campbell K.S."/>
            <person name="Brown S.E."/>
            <person name="Bonaldo M.F."/>
            <person name="Zhu J."/>
            <person name="Sinkins S.P."/>
            <person name="Hogenkamp D.G."/>
            <person name="Amedeo P."/>
            <person name="Arensburger P."/>
            <person name="Atkinson P.W."/>
            <person name="Bidwell S.L."/>
            <person name="Biedler J."/>
            <person name="Birney E."/>
            <person name="Bruggner R.V."/>
            <person name="Costas J."/>
            <person name="Coy M.R."/>
            <person name="Crabtree J."/>
            <person name="Crawford M."/>
            <person name="DeBruyn B."/>
            <person name="DeCaprio D."/>
            <person name="Eiglmeier K."/>
            <person name="Eisenstadt E."/>
            <person name="El-Dorry H."/>
            <person name="Gelbart W.M."/>
            <person name="Gomes S.L."/>
            <person name="Hammond M."/>
            <person name="Hannick L.I."/>
            <person name="Hogan J.R."/>
            <person name="Holmes M.H."/>
            <person name="Jaffe D."/>
            <person name="Johnston S.J."/>
            <person name="Kennedy R.C."/>
            <person name="Koo H."/>
            <person name="Kravitz S."/>
            <person name="Kriventseva E.V."/>
            <person name="Kulp D."/>
            <person name="Labutti K."/>
            <person name="Lee E."/>
            <person name="Li S."/>
            <person name="Lovin D.D."/>
            <person name="Mao C."/>
            <person name="Mauceli E."/>
            <person name="Menck C.F."/>
            <person name="Miller J.R."/>
            <person name="Montgomery P."/>
            <person name="Mori A."/>
            <person name="Nascimento A.L."/>
            <person name="Naveira H.F."/>
            <person name="Nusbaum C."/>
            <person name="O'Leary S.B."/>
            <person name="Orvis J."/>
            <person name="Pertea M."/>
            <person name="Quesneville H."/>
            <person name="Reidenbach K.R."/>
            <person name="Rogers Y.-H.C."/>
            <person name="Roth C.W."/>
            <person name="Schneider J.R."/>
            <person name="Schatz M."/>
            <person name="Shumway M."/>
            <person name="Stanke M."/>
            <person name="Stinson E.O."/>
            <person name="Tubio J.M.C."/>
            <person name="Vanzee J.P."/>
            <person name="Verjovski-Almeida S."/>
            <person name="Werner D."/>
            <person name="White O.R."/>
            <person name="Wyder S."/>
            <person name="Zeng Q."/>
            <person name="Zhao Q."/>
            <person name="Zhao Y."/>
            <person name="Hill C.A."/>
            <person name="Raikhel A.S."/>
            <person name="Soares M.B."/>
            <person name="Knudson D.L."/>
            <person name="Lee N.H."/>
            <person name="Galagan J."/>
            <person name="Salzberg S.L."/>
            <person name="Paulsen I.T."/>
            <person name="Dimopoulos G."/>
            <person name="Collins F.H."/>
            <person name="Bruce B."/>
            <person name="Fraser-Liggett C.M."/>
            <person name="Severson D.W."/>
        </authorList>
    </citation>
    <scope>NUCLEOTIDE SEQUENCE [LARGE SCALE GENOMIC DNA]</scope>
    <source>
        <strain>LVPib12</strain>
    </source>
</reference>
<proteinExistence type="inferred from homology"/>
<organism>
    <name type="scientific">Aedes aegypti</name>
    <name type="common">Yellowfever mosquito</name>
    <name type="synonym">Culex aegypti</name>
    <dbReference type="NCBI Taxonomy" id="7159"/>
    <lineage>
        <taxon>Eukaryota</taxon>
        <taxon>Metazoa</taxon>
        <taxon>Ecdysozoa</taxon>
        <taxon>Arthropoda</taxon>
        <taxon>Hexapoda</taxon>
        <taxon>Insecta</taxon>
        <taxon>Pterygota</taxon>
        <taxon>Neoptera</taxon>
        <taxon>Endopterygota</taxon>
        <taxon>Diptera</taxon>
        <taxon>Nematocera</taxon>
        <taxon>Culicoidea</taxon>
        <taxon>Culicidae</taxon>
        <taxon>Culicinae</taxon>
        <taxon>Aedini</taxon>
        <taxon>Aedes</taxon>
        <taxon>Stegomyia</taxon>
    </lineage>
</organism>
<comment type="function">
    <text evidence="1">Involved in mRNA export coupled transcription activation by association with both the TREX-2 and the SAGA complexes. The transcription regulatory histone acetylation (HAT) complex SAGA is a multiprotein complex that activates transcription by remodeling chromatin and mediating histone acetylation and deubiquitination. Within the SAGA complex, participates in a subcomplex that specifically deubiquitinates histones. The SAGA complex is recruited to specific gene promoters by activators, where it is required for transcription. The TREX-2 complex functions in docking export-competent ribonucleoprotein particles (mRNPs) to the nuclear entrance of the nuclear pore complex (nuclear basket). TREX-2 participates in mRNA export and accurate chromatin positioning in the nucleus by tethering genes to the nuclear periphery (By similarity).</text>
</comment>
<comment type="subunit">
    <text evidence="1">Component of the nuclear pore complex (NPC)-associated TREX-2 complex (transcription and export complex 2). Component of the SAGA transcription coactivator-HAT complex. Within the SAGA complex, participates in a subcomplex of SAGA called the DUB module (deubiquitination module) (By similarity).</text>
</comment>
<comment type="subcellular location">
    <subcellularLocation>
        <location evidence="2">Nucleus</location>
        <location evidence="2">Nucleoplasm</location>
    </subcellularLocation>
</comment>
<comment type="similarity">
    <text evidence="2">Belongs to the ENY2 family.</text>
</comment>
<keyword id="KW-0010">Activator</keyword>
<keyword id="KW-0156">Chromatin regulator</keyword>
<keyword id="KW-0509">mRNA transport</keyword>
<keyword id="KW-0539">Nucleus</keyword>
<keyword id="KW-0653">Protein transport</keyword>
<keyword id="KW-1185">Reference proteome</keyword>
<keyword id="KW-0804">Transcription</keyword>
<keyword id="KW-0805">Transcription regulation</keyword>
<keyword id="KW-0811">Translocation</keyword>
<keyword id="KW-0813">Transport</keyword>